<keyword id="KW-0067">ATP-binding</keyword>
<keyword id="KW-0963">Cytoplasm</keyword>
<keyword id="KW-0436">Ligase</keyword>
<keyword id="KW-0547">Nucleotide-binding</keyword>
<keyword id="KW-0566">Pantothenate biosynthesis</keyword>
<accession>B1IQK7</accession>
<name>PANC_ECOLC</name>
<comment type="function">
    <text evidence="1">Catalyzes the condensation of pantoate with beta-alanine in an ATP-dependent reaction via a pantoyl-adenylate intermediate.</text>
</comment>
<comment type="catalytic activity">
    <reaction evidence="1">
        <text>(R)-pantoate + beta-alanine + ATP = (R)-pantothenate + AMP + diphosphate + H(+)</text>
        <dbReference type="Rhea" id="RHEA:10912"/>
        <dbReference type="ChEBI" id="CHEBI:15378"/>
        <dbReference type="ChEBI" id="CHEBI:15980"/>
        <dbReference type="ChEBI" id="CHEBI:29032"/>
        <dbReference type="ChEBI" id="CHEBI:30616"/>
        <dbReference type="ChEBI" id="CHEBI:33019"/>
        <dbReference type="ChEBI" id="CHEBI:57966"/>
        <dbReference type="ChEBI" id="CHEBI:456215"/>
        <dbReference type="EC" id="6.3.2.1"/>
    </reaction>
</comment>
<comment type="pathway">
    <text evidence="1">Cofactor biosynthesis; (R)-pantothenate biosynthesis; (R)-pantothenate from (R)-pantoate and beta-alanine: step 1/1.</text>
</comment>
<comment type="subunit">
    <text evidence="1">Homodimer.</text>
</comment>
<comment type="subcellular location">
    <subcellularLocation>
        <location evidence="1">Cytoplasm</location>
    </subcellularLocation>
</comment>
<comment type="miscellaneous">
    <text evidence="1">The reaction proceeds by a bi uni uni bi ping pong mechanism.</text>
</comment>
<comment type="similarity">
    <text evidence="1">Belongs to the pantothenate synthetase family.</text>
</comment>
<sequence length="283" mass="31626">MLIIETLPLLRQQIRRLRMEGKRVALVPTMGNLHDGHMKLVDEAKARADVVVVSIFVNPMQFDRPEDLARYPRTLQEDCEKLNKRKVDLVFAPSVKEIYPNGTETHTYVDVPGLSTMLEGASRPGHFRGVSTIVSKLFNLVQPDIACFGEKDFQQLALIRKMVADMGFDIEIVGVPIMRAKDGLALSSRNGYLTAEQRKIAPGLYKVLSSIADKLQVGERDLDEIITIAGQELNEKGFRADDIQIRDADTLLEVSETSKRAVILVAAWLGDARLIDNKMVELA</sequence>
<dbReference type="EC" id="6.3.2.1" evidence="1"/>
<dbReference type="EMBL" id="CP000946">
    <property type="protein sequence ID" value="ACA79140.1"/>
    <property type="molecule type" value="Genomic_DNA"/>
</dbReference>
<dbReference type="RefSeq" id="WP_000905386.1">
    <property type="nucleotide sequence ID" value="NZ_MTFT01000035.1"/>
</dbReference>
<dbReference type="BMRB" id="B1IQK7"/>
<dbReference type="SMR" id="B1IQK7"/>
<dbReference type="KEGG" id="ecl:EcolC_3526"/>
<dbReference type="HOGENOM" id="CLU_047148_0_0_6"/>
<dbReference type="UniPathway" id="UPA00028">
    <property type="reaction ID" value="UER00005"/>
</dbReference>
<dbReference type="GO" id="GO:0005829">
    <property type="term" value="C:cytosol"/>
    <property type="evidence" value="ECO:0007669"/>
    <property type="project" value="TreeGrafter"/>
</dbReference>
<dbReference type="GO" id="GO:0005524">
    <property type="term" value="F:ATP binding"/>
    <property type="evidence" value="ECO:0007669"/>
    <property type="project" value="UniProtKB-KW"/>
</dbReference>
<dbReference type="GO" id="GO:0004592">
    <property type="term" value="F:pantoate-beta-alanine ligase activity"/>
    <property type="evidence" value="ECO:0007669"/>
    <property type="project" value="UniProtKB-UniRule"/>
</dbReference>
<dbReference type="GO" id="GO:0015940">
    <property type="term" value="P:pantothenate biosynthetic process"/>
    <property type="evidence" value="ECO:0007669"/>
    <property type="project" value="UniProtKB-UniRule"/>
</dbReference>
<dbReference type="CDD" id="cd00560">
    <property type="entry name" value="PanC"/>
    <property type="match status" value="1"/>
</dbReference>
<dbReference type="FunFam" id="3.30.1300.10:FF:000001">
    <property type="entry name" value="Pantothenate synthetase"/>
    <property type="match status" value="1"/>
</dbReference>
<dbReference type="FunFam" id="3.40.50.620:FF:000013">
    <property type="entry name" value="Pantothenate synthetase"/>
    <property type="match status" value="1"/>
</dbReference>
<dbReference type="Gene3D" id="3.40.50.620">
    <property type="entry name" value="HUPs"/>
    <property type="match status" value="1"/>
</dbReference>
<dbReference type="Gene3D" id="3.30.1300.10">
    <property type="entry name" value="Pantoate-beta-alanine ligase, C-terminal domain"/>
    <property type="match status" value="1"/>
</dbReference>
<dbReference type="HAMAP" id="MF_00158">
    <property type="entry name" value="PanC"/>
    <property type="match status" value="1"/>
</dbReference>
<dbReference type="InterPro" id="IPR004821">
    <property type="entry name" value="Cyt_trans-like"/>
</dbReference>
<dbReference type="InterPro" id="IPR003721">
    <property type="entry name" value="Pantoate_ligase"/>
</dbReference>
<dbReference type="InterPro" id="IPR042176">
    <property type="entry name" value="Pantoate_ligase_C"/>
</dbReference>
<dbReference type="InterPro" id="IPR014729">
    <property type="entry name" value="Rossmann-like_a/b/a_fold"/>
</dbReference>
<dbReference type="NCBIfam" id="TIGR00125">
    <property type="entry name" value="cyt_tran_rel"/>
    <property type="match status" value="1"/>
</dbReference>
<dbReference type="NCBIfam" id="TIGR00018">
    <property type="entry name" value="panC"/>
    <property type="match status" value="1"/>
</dbReference>
<dbReference type="PANTHER" id="PTHR21299">
    <property type="entry name" value="CYTIDYLATE KINASE/PANTOATE-BETA-ALANINE LIGASE"/>
    <property type="match status" value="1"/>
</dbReference>
<dbReference type="PANTHER" id="PTHR21299:SF1">
    <property type="entry name" value="PANTOATE--BETA-ALANINE LIGASE"/>
    <property type="match status" value="1"/>
</dbReference>
<dbReference type="Pfam" id="PF02569">
    <property type="entry name" value="Pantoate_ligase"/>
    <property type="match status" value="1"/>
</dbReference>
<dbReference type="SUPFAM" id="SSF52374">
    <property type="entry name" value="Nucleotidylyl transferase"/>
    <property type="match status" value="1"/>
</dbReference>
<evidence type="ECO:0000255" key="1">
    <source>
        <dbReference type="HAMAP-Rule" id="MF_00158"/>
    </source>
</evidence>
<protein>
    <recommendedName>
        <fullName evidence="1">Pantothenate synthetase</fullName>
        <shortName evidence="1">PS</shortName>
        <ecNumber evidence="1">6.3.2.1</ecNumber>
    </recommendedName>
    <alternativeName>
        <fullName evidence="1">Pantoate--beta-alanine ligase</fullName>
    </alternativeName>
    <alternativeName>
        <fullName evidence="1">Pantoate-activating enzyme</fullName>
    </alternativeName>
</protein>
<reference key="1">
    <citation type="submission" date="2008-02" db="EMBL/GenBank/DDBJ databases">
        <title>Complete sequence of Escherichia coli C str. ATCC 8739.</title>
        <authorList>
            <person name="Copeland A."/>
            <person name="Lucas S."/>
            <person name="Lapidus A."/>
            <person name="Glavina del Rio T."/>
            <person name="Dalin E."/>
            <person name="Tice H."/>
            <person name="Bruce D."/>
            <person name="Goodwin L."/>
            <person name="Pitluck S."/>
            <person name="Kiss H."/>
            <person name="Brettin T."/>
            <person name="Detter J.C."/>
            <person name="Han C."/>
            <person name="Kuske C.R."/>
            <person name="Schmutz J."/>
            <person name="Larimer F."/>
            <person name="Land M."/>
            <person name="Hauser L."/>
            <person name="Kyrpides N."/>
            <person name="Mikhailova N."/>
            <person name="Ingram L."/>
            <person name="Richardson P."/>
        </authorList>
    </citation>
    <scope>NUCLEOTIDE SEQUENCE [LARGE SCALE GENOMIC DNA]</scope>
    <source>
        <strain>ATCC 8739 / DSM 1576 / NBRC 3972 / NCIMB 8545 / WDCM 00012 / Crooks</strain>
    </source>
</reference>
<feature type="chain" id="PRO_1000097063" description="Pantothenate synthetase">
    <location>
        <begin position="1"/>
        <end position="283"/>
    </location>
</feature>
<feature type="active site" description="Proton donor" evidence="1">
    <location>
        <position position="37"/>
    </location>
</feature>
<feature type="binding site" evidence="1">
    <location>
        <begin position="30"/>
        <end position="37"/>
    </location>
    <ligand>
        <name>ATP</name>
        <dbReference type="ChEBI" id="CHEBI:30616"/>
    </ligand>
</feature>
<feature type="binding site" evidence="1">
    <location>
        <position position="61"/>
    </location>
    <ligand>
        <name>(R)-pantoate</name>
        <dbReference type="ChEBI" id="CHEBI:15980"/>
    </ligand>
</feature>
<feature type="binding site" evidence="1">
    <location>
        <position position="61"/>
    </location>
    <ligand>
        <name>beta-alanine</name>
        <dbReference type="ChEBI" id="CHEBI:57966"/>
    </ligand>
</feature>
<feature type="binding site" evidence="1">
    <location>
        <begin position="149"/>
        <end position="152"/>
    </location>
    <ligand>
        <name>ATP</name>
        <dbReference type="ChEBI" id="CHEBI:30616"/>
    </ligand>
</feature>
<feature type="binding site" evidence="1">
    <location>
        <position position="155"/>
    </location>
    <ligand>
        <name>(R)-pantoate</name>
        <dbReference type="ChEBI" id="CHEBI:15980"/>
    </ligand>
</feature>
<feature type="binding site" evidence="1">
    <location>
        <begin position="186"/>
        <end position="189"/>
    </location>
    <ligand>
        <name>ATP</name>
        <dbReference type="ChEBI" id="CHEBI:30616"/>
    </ligand>
</feature>
<proteinExistence type="inferred from homology"/>
<gene>
    <name evidence="1" type="primary">panC</name>
    <name type="ordered locus">EcolC_3526</name>
</gene>
<organism>
    <name type="scientific">Escherichia coli (strain ATCC 8739 / DSM 1576 / NBRC 3972 / NCIMB 8545 / WDCM 00012 / Crooks)</name>
    <dbReference type="NCBI Taxonomy" id="481805"/>
    <lineage>
        <taxon>Bacteria</taxon>
        <taxon>Pseudomonadati</taxon>
        <taxon>Pseudomonadota</taxon>
        <taxon>Gammaproteobacteria</taxon>
        <taxon>Enterobacterales</taxon>
        <taxon>Enterobacteriaceae</taxon>
        <taxon>Escherichia</taxon>
    </lineage>
</organism>